<protein>
    <recommendedName>
        <fullName evidence="1">Exodeoxyribonuclease 7 small subunit</fullName>
        <ecNumber evidence="1">3.1.11.6</ecNumber>
    </recommendedName>
    <alternativeName>
        <fullName evidence="1">Exodeoxyribonuclease VII small subunit</fullName>
        <shortName evidence="1">Exonuclease VII small subunit</shortName>
    </alternativeName>
</protein>
<feature type="chain" id="PRO_1000205226" description="Exodeoxyribonuclease 7 small subunit">
    <location>
        <begin position="1"/>
        <end position="86"/>
    </location>
</feature>
<feature type="region of interest" description="Disordered" evidence="2">
    <location>
        <begin position="1"/>
        <end position="27"/>
    </location>
</feature>
<organism>
    <name type="scientific">Helicobacter pylori (strain G27)</name>
    <dbReference type="NCBI Taxonomy" id="563041"/>
    <lineage>
        <taxon>Bacteria</taxon>
        <taxon>Pseudomonadati</taxon>
        <taxon>Campylobacterota</taxon>
        <taxon>Epsilonproteobacteria</taxon>
        <taxon>Campylobacterales</taxon>
        <taxon>Helicobacteraceae</taxon>
        <taxon>Helicobacter</taxon>
    </lineage>
</organism>
<comment type="function">
    <text evidence="1">Bidirectionally degrades single-stranded DNA into large acid-insoluble oligonucleotides, which are then degraded further into small acid-soluble oligonucleotides.</text>
</comment>
<comment type="catalytic activity">
    <reaction evidence="1">
        <text>Exonucleolytic cleavage in either 5'- to 3'- or 3'- to 5'-direction to yield nucleoside 5'-phosphates.</text>
        <dbReference type="EC" id="3.1.11.6"/>
    </reaction>
</comment>
<comment type="subunit">
    <text evidence="1">Heterooligomer composed of large and small subunits.</text>
</comment>
<comment type="subcellular location">
    <subcellularLocation>
        <location evidence="1">Cytoplasm</location>
    </subcellularLocation>
</comment>
<comment type="similarity">
    <text evidence="1">Belongs to the XseB family.</text>
</comment>
<evidence type="ECO:0000255" key="1">
    <source>
        <dbReference type="HAMAP-Rule" id="MF_00337"/>
    </source>
</evidence>
<evidence type="ECO:0000256" key="2">
    <source>
        <dbReference type="SAM" id="MobiDB-lite"/>
    </source>
</evidence>
<proteinExistence type="inferred from homology"/>
<name>EX7S_HELPG</name>
<reference key="1">
    <citation type="journal article" date="2009" name="J. Bacteriol.">
        <title>The complete genome sequence of Helicobacter pylori strain G27.</title>
        <authorList>
            <person name="Baltrus D.A."/>
            <person name="Amieva M.R."/>
            <person name="Covacci A."/>
            <person name="Lowe T.M."/>
            <person name="Merrell D.S."/>
            <person name="Ottemann K.M."/>
            <person name="Stein M."/>
            <person name="Salama N.R."/>
            <person name="Guillemin K."/>
        </authorList>
    </citation>
    <scope>NUCLEOTIDE SEQUENCE [LARGE SCALE GENOMIC DNA]</scope>
    <source>
        <strain>G27</strain>
    </source>
</reference>
<keyword id="KW-0963">Cytoplasm</keyword>
<keyword id="KW-0269">Exonuclease</keyword>
<keyword id="KW-0378">Hydrolase</keyword>
<keyword id="KW-0540">Nuclease</keyword>
<keyword id="KW-1185">Reference proteome</keyword>
<sequence length="86" mass="9981">MQDELFETEKIPPKNTKNAKNAPKKSFEEHVHSLEQAIDRLNDPNLSLKDGMDLYKTAMQELFLAQKLLENAYLEHEKLQTPDKKA</sequence>
<dbReference type="EC" id="3.1.11.6" evidence="1"/>
<dbReference type="EMBL" id="CP001173">
    <property type="protein sequence ID" value="ACI28150.1"/>
    <property type="molecule type" value="Genomic_DNA"/>
</dbReference>
<dbReference type="RefSeq" id="WP_001150340.1">
    <property type="nucleotide sequence ID" value="NC_011333.1"/>
</dbReference>
<dbReference type="SMR" id="B5Z9A1"/>
<dbReference type="KEGG" id="hpg:HPG27_1405"/>
<dbReference type="HOGENOM" id="CLU_145918_6_0_7"/>
<dbReference type="Proteomes" id="UP000001735">
    <property type="component" value="Chromosome"/>
</dbReference>
<dbReference type="GO" id="GO:0005737">
    <property type="term" value="C:cytoplasm"/>
    <property type="evidence" value="ECO:0007669"/>
    <property type="project" value="UniProtKB-SubCell"/>
</dbReference>
<dbReference type="GO" id="GO:0009318">
    <property type="term" value="C:exodeoxyribonuclease VII complex"/>
    <property type="evidence" value="ECO:0007669"/>
    <property type="project" value="InterPro"/>
</dbReference>
<dbReference type="GO" id="GO:0008855">
    <property type="term" value="F:exodeoxyribonuclease VII activity"/>
    <property type="evidence" value="ECO:0007669"/>
    <property type="project" value="UniProtKB-UniRule"/>
</dbReference>
<dbReference type="GO" id="GO:0006308">
    <property type="term" value="P:DNA catabolic process"/>
    <property type="evidence" value="ECO:0007669"/>
    <property type="project" value="UniProtKB-UniRule"/>
</dbReference>
<dbReference type="Gene3D" id="1.10.287.1040">
    <property type="entry name" value="Exonuclease VII, small subunit"/>
    <property type="match status" value="1"/>
</dbReference>
<dbReference type="HAMAP" id="MF_00337">
    <property type="entry name" value="Exonuc_7_S"/>
    <property type="match status" value="1"/>
</dbReference>
<dbReference type="InterPro" id="IPR003761">
    <property type="entry name" value="Exonuc_VII_S"/>
</dbReference>
<dbReference type="InterPro" id="IPR037004">
    <property type="entry name" value="Exonuc_VII_ssu_sf"/>
</dbReference>
<dbReference type="NCBIfam" id="NF010668">
    <property type="entry name" value="PRK14065.1"/>
    <property type="match status" value="1"/>
</dbReference>
<dbReference type="NCBIfam" id="TIGR01280">
    <property type="entry name" value="xseB"/>
    <property type="match status" value="1"/>
</dbReference>
<dbReference type="Pfam" id="PF02609">
    <property type="entry name" value="Exonuc_VII_S"/>
    <property type="match status" value="1"/>
</dbReference>
<dbReference type="SUPFAM" id="SSF116842">
    <property type="entry name" value="XseB-like"/>
    <property type="match status" value="1"/>
</dbReference>
<accession>B5Z9A1</accession>
<gene>
    <name evidence="1" type="primary">xseB</name>
    <name type="ordered locus">HPG27_1405</name>
</gene>